<gene>
    <name type="primary">cyp1a1</name>
</gene>
<accession>Q92148</accession>
<evidence type="ECO:0000250" key="1"/>
<evidence type="ECO:0000305" key="2"/>
<protein>
    <recommendedName>
        <fullName>Cytochrome P450 1A1</fullName>
        <ecNumber>1.14.14.1</ecNumber>
    </recommendedName>
    <alternativeName>
        <fullName>CYPIA1</fullName>
    </alternativeName>
</protein>
<comment type="function">
    <text>Cytochromes P450 are a group of heme-thiolate monooxygenases. They oxidize a variety of structurally unrelated compounds, including steroids, fatty acids, and xenobiotics.</text>
</comment>
<comment type="catalytic activity">
    <reaction>
        <text>an organic molecule + reduced [NADPH--hemoprotein reductase] + O2 = an alcohol + oxidized [NADPH--hemoprotein reductase] + H2O + H(+)</text>
        <dbReference type="Rhea" id="RHEA:17149"/>
        <dbReference type="Rhea" id="RHEA-COMP:11964"/>
        <dbReference type="Rhea" id="RHEA-COMP:11965"/>
        <dbReference type="ChEBI" id="CHEBI:15377"/>
        <dbReference type="ChEBI" id="CHEBI:15378"/>
        <dbReference type="ChEBI" id="CHEBI:15379"/>
        <dbReference type="ChEBI" id="CHEBI:30879"/>
        <dbReference type="ChEBI" id="CHEBI:57618"/>
        <dbReference type="ChEBI" id="CHEBI:58210"/>
        <dbReference type="ChEBI" id="CHEBI:142491"/>
        <dbReference type="EC" id="1.14.14.1"/>
    </reaction>
</comment>
<comment type="cofactor">
    <cofactor evidence="1">
        <name>heme</name>
        <dbReference type="ChEBI" id="CHEBI:30413"/>
    </cofactor>
</comment>
<comment type="subcellular location">
    <subcellularLocation>
        <location>Endoplasmic reticulum membrane</location>
        <topology>Peripheral membrane protein</topology>
    </subcellularLocation>
    <subcellularLocation>
        <location>Microsome membrane</location>
        <topology>Peripheral membrane protein</topology>
    </subcellularLocation>
</comment>
<comment type="induction">
    <text>By benzo[a]pyrene (B[A]P) and beta-naphthoflavone (beta-NF).</text>
</comment>
<comment type="similarity">
    <text evidence="2">Belongs to the cytochrome P450 family.</text>
</comment>
<name>CP1A1_MICTO</name>
<dbReference type="EC" id="1.14.14.1"/>
<dbReference type="EMBL" id="L41917">
    <property type="protein sequence ID" value="AAB00085.1"/>
    <property type="molecule type" value="Genomic_DNA"/>
</dbReference>
<dbReference type="EMBL" id="L41886">
    <property type="protein sequence ID" value="AAB00082.1"/>
    <property type="molecule type" value="mRNA"/>
</dbReference>
<dbReference type="PIR" id="S66464">
    <property type="entry name" value="S66464"/>
</dbReference>
<dbReference type="SMR" id="Q92148"/>
<dbReference type="GO" id="GO:0005789">
    <property type="term" value="C:endoplasmic reticulum membrane"/>
    <property type="evidence" value="ECO:0007669"/>
    <property type="project" value="UniProtKB-SubCell"/>
</dbReference>
<dbReference type="GO" id="GO:0020037">
    <property type="term" value="F:heme binding"/>
    <property type="evidence" value="ECO:0007669"/>
    <property type="project" value="InterPro"/>
</dbReference>
<dbReference type="GO" id="GO:0005506">
    <property type="term" value="F:iron ion binding"/>
    <property type="evidence" value="ECO:0007669"/>
    <property type="project" value="InterPro"/>
</dbReference>
<dbReference type="GO" id="GO:0004508">
    <property type="term" value="F:steroid 17-alpha-monooxygenase activity"/>
    <property type="evidence" value="ECO:0007669"/>
    <property type="project" value="TreeGrafter"/>
</dbReference>
<dbReference type="GO" id="GO:0042446">
    <property type="term" value="P:hormone biosynthetic process"/>
    <property type="evidence" value="ECO:0007669"/>
    <property type="project" value="TreeGrafter"/>
</dbReference>
<dbReference type="GO" id="GO:0042448">
    <property type="term" value="P:progesterone metabolic process"/>
    <property type="evidence" value="ECO:0007669"/>
    <property type="project" value="TreeGrafter"/>
</dbReference>
<dbReference type="FunFam" id="1.10.630.10:FF:000002">
    <property type="entry name" value="Cytochrome P450 1A1"/>
    <property type="match status" value="1"/>
</dbReference>
<dbReference type="Gene3D" id="1.10.630.10">
    <property type="entry name" value="Cytochrome P450"/>
    <property type="match status" value="1"/>
</dbReference>
<dbReference type="InterPro" id="IPR001128">
    <property type="entry name" value="Cyt_P450"/>
</dbReference>
<dbReference type="InterPro" id="IPR017972">
    <property type="entry name" value="Cyt_P450_CS"/>
</dbReference>
<dbReference type="InterPro" id="IPR002401">
    <property type="entry name" value="Cyt_P450_E_grp-I"/>
</dbReference>
<dbReference type="InterPro" id="IPR008066">
    <property type="entry name" value="Cyt_P450_E_grp-I_CYP1"/>
</dbReference>
<dbReference type="InterPro" id="IPR036396">
    <property type="entry name" value="Cyt_P450_sf"/>
</dbReference>
<dbReference type="PANTHER" id="PTHR24289:SF21">
    <property type="entry name" value="CYTOCHROME P450 1A"/>
    <property type="match status" value="1"/>
</dbReference>
<dbReference type="PANTHER" id="PTHR24289">
    <property type="entry name" value="STEROID 17-ALPHA-HYDROXYLASE/17,20 LYASE"/>
    <property type="match status" value="1"/>
</dbReference>
<dbReference type="Pfam" id="PF00067">
    <property type="entry name" value="p450"/>
    <property type="match status" value="2"/>
</dbReference>
<dbReference type="PRINTS" id="PR00463">
    <property type="entry name" value="EP450I"/>
</dbReference>
<dbReference type="PRINTS" id="PR01683">
    <property type="entry name" value="EP450ICYP1A"/>
</dbReference>
<dbReference type="PRINTS" id="PR00385">
    <property type="entry name" value="P450"/>
</dbReference>
<dbReference type="SUPFAM" id="SSF48264">
    <property type="entry name" value="Cytochrome P450"/>
    <property type="match status" value="1"/>
</dbReference>
<dbReference type="PROSITE" id="PS00086">
    <property type="entry name" value="CYTOCHROME_P450"/>
    <property type="match status" value="1"/>
</dbReference>
<reference key="1">
    <citation type="journal article" date="1995" name="Arch. Biochem. Biophys.">
        <title>Characterization and prevalence of a polymorphism in the 3' untranslated region of cytochrome P4501A1 in cancer-prone Atlantic tomcod.</title>
        <authorList>
            <person name="Roy N.K."/>
            <person name="Kreamer G.L."/>
            <person name="Konkle B."/>
            <person name="Grunwald C."/>
            <person name="Wirgin I."/>
        </authorList>
    </citation>
    <scope>NUCLEOTIDE SEQUENCE [GENOMIC DNA / MRNA]</scope>
    <source>
        <strain>Hudson river</strain>
        <tissue>Liver</tissue>
    </source>
</reference>
<reference key="2">
    <citation type="journal article" date="1996" name="Pharmacogenetics">
        <title>Characterization of CYP1A1 gene regulatory elements in cancer-prone Atlantic tomcod.</title>
        <authorList>
            <person name="Roy N.K."/>
            <person name="Konkle B."/>
            <person name="Wirgin I."/>
        </authorList>
    </citation>
    <scope>NUCLEOTIDE SEQUENCE [GENOMIC DNA]</scope>
</reference>
<feature type="chain" id="PRO_0000051640" description="Cytochrome P450 1A1">
    <location>
        <begin position="1"/>
        <end position="515"/>
    </location>
</feature>
<feature type="binding site" evidence="1">
    <location>
        <position position="225"/>
    </location>
    <ligand>
        <name>substrate</name>
    </ligand>
</feature>
<feature type="binding site" description="axial binding residue" evidence="1">
    <location>
        <position position="459"/>
    </location>
    <ligand>
        <name>heme</name>
        <dbReference type="ChEBI" id="CHEBI:30413"/>
    </ligand>
    <ligandPart>
        <name>Fe</name>
        <dbReference type="ChEBI" id="CHEBI:18248"/>
    </ligandPart>
</feature>
<keyword id="KW-0256">Endoplasmic reticulum</keyword>
<keyword id="KW-0349">Heme</keyword>
<keyword id="KW-0408">Iron</keyword>
<keyword id="KW-0472">Membrane</keyword>
<keyword id="KW-0479">Metal-binding</keyword>
<keyword id="KW-0492">Microsome</keyword>
<keyword id="KW-0503">Monooxygenase</keyword>
<keyword id="KW-0560">Oxidoreductase</keyword>
<proteinExistence type="evidence at transcript level"/>
<organism>
    <name type="scientific">Microgadus tomcod</name>
    <name type="common">Atlantic tomcod</name>
    <dbReference type="NCBI Taxonomy" id="34823"/>
    <lineage>
        <taxon>Eukaryota</taxon>
        <taxon>Metazoa</taxon>
        <taxon>Chordata</taxon>
        <taxon>Craniata</taxon>
        <taxon>Vertebrata</taxon>
        <taxon>Euteleostomi</taxon>
        <taxon>Actinopterygii</taxon>
        <taxon>Neopterygii</taxon>
        <taxon>Teleostei</taxon>
        <taxon>Neoteleostei</taxon>
        <taxon>Acanthomorphata</taxon>
        <taxon>Zeiogadaria</taxon>
        <taxon>Gadariae</taxon>
        <taxon>Gadiformes</taxon>
        <taxon>Gadoidei</taxon>
        <taxon>Gadidae</taxon>
        <taxon>Microgadus</taxon>
    </lineage>
</organism>
<sequence>MALMILPLIGSVSVSETLVAMITVCMIYMLMKFLHPDVPEAPPAPGPQALPIIGNVWSWENGLPEPHGHGQRYGDILQIQIGMRSVVVLSGHETVRQALIKQGHDLRPPDLYSFQFINDGKSLAFSTDQAGVWSPPKAGHECPALLFHARGHHAAVLLHVGGACLQGGRLPRQAAVQRHGTDASFDPFRHIVVSVANVICGMCFGRRYGHEDQELLSLVNLTDEFGKVVGSGNLADFIPLLRFLPNATMKRFMAINERFMTFVQKIVTEHYNTYDKDNIRDITDSLIDHCEDRKLDENSNIQMSDEKIVGIVNDLFGAGFDTVSTALSWSVMYLVAHPEIQERLHQEIKDKVGLSRSPVLTDRHNLPILEAFIFEIFRHSSFLPFTIPHCATKDTSLDGYFIPKDTCVFINQWQINHDPELWKEPSTFNPDRFLSADASELNKLAGEKVMLFGMGKRRCIGEMVARNEVFLFLAILVQRLTFHAVPGEPLDMTPEYGLTMKHKRCHLRATVRTTE</sequence>